<accession>Q8D556</accession>
<organism>
    <name type="scientific">Vibrio vulnificus (strain CMCP6)</name>
    <dbReference type="NCBI Taxonomy" id="216895"/>
    <lineage>
        <taxon>Bacteria</taxon>
        <taxon>Pseudomonadati</taxon>
        <taxon>Pseudomonadota</taxon>
        <taxon>Gammaproteobacteria</taxon>
        <taxon>Vibrionales</taxon>
        <taxon>Vibrionaceae</taxon>
        <taxon>Vibrio</taxon>
    </lineage>
</organism>
<keyword id="KW-0413">Isomerase</keyword>
<proteinExistence type="inferred from homology"/>
<protein>
    <recommendedName>
        <fullName evidence="1">Uronate isomerase</fullName>
        <ecNumber evidence="1">5.3.1.12</ecNumber>
    </recommendedName>
    <alternativeName>
        <fullName evidence="1">Glucuronate isomerase</fullName>
    </alternativeName>
    <alternativeName>
        <fullName evidence="1">Uronic isomerase</fullName>
    </alternativeName>
</protein>
<name>UXAC_VIBVU</name>
<reference key="1">
    <citation type="submission" date="2002-12" db="EMBL/GenBank/DDBJ databases">
        <title>Complete genome sequence of Vibrio vulnificus CMCP6.</title>
        <authorList>
            <person name="Rhee J.H."/>
            <person name="Kim S.Y."/>
            <person name="Chung S.S."/>
            <person name="Kim J.J."/>
            <person name="Moon Y.H."/>
            <person name="Jeong H."/>
            <person name="Choy H.E."/>
        </authorList>
    </citation>
    <scope>NUCLEOTIDE SEQUENCE [LARGE SCALE GENOMIC DNA]</scope>
    <source>
        <strain>CMCP6</strain>
    </source>
</reference>
<sequence length="470" mass="54023">MKNFLCEDFLLSNETARRLYHEHACHQPIYDYHCHLNPAEVAQNRQFDNLGQIWLEGDHYKWRGMRSAGIEERLITGDASDYDKYMAWAKTVPQTLGNPLYHWTHLELRRPFGITNTLFSPDTADQIWHQCNELLATPEFTARGIMQQMNVVMAGTTDDPIDSLKHHKTIAEDDTFNVKVLPSWRPDKAFKIELDLFADYMHKLGEVADIEIRRFDDLLSALDKRLAHFDAHGCRAADHGIEIVRYAPIPSEADLDVLLARRLNGEVLSELECAQFSTAVQVWLGKRYAQLGWVMQLHIGAQRNNSTRMFQLLGADAGFDSIGDRPFAFELAHLLDEMDQTNELPRTILYCLNPRDNEMMATMIGNFQGGGIAGKVQFGSGWWFNDQKDGMQRQMEQLSQLGLLSQFVGMLTDSRSFLSYTRHEYFRRILCDMVGRWAENGEVPNDLSLLGPMVEDICFGNAKRYFEERV</sequence>
<evidence type="ECO:0000255" key="1">
    <source>
        <dbReference type="HAMAP-Rule" id="MF_00675"/>
    </source>
</evidence>
<dbReference type="EC" id="5.3.1.12" evidence="1"/>
<dbReference type="EMBL" id="AE016796">
    <property type="protein sequence ID" value="AAO07977.1"/>
    <property type="molecule type" value="Genomic_DNA"/>
</dbReference>
<dbReference type="RefSeq" id="WP_011081971.1">
    <property type="nucleotide sequence ID" value="NC_004460.2"/>
</dbReference>
<dbReference type="SMR" id="Q8D556"/>
<dbReference type="KEGG" id="vvu:VV2_1070"/>
<dbReference type="HOGENOM" id="CLU_044465_1_0_6"/>
<dbReference type="UniPathway" id="UPA00246"/>
<dbReference type="Proteomes" id="UP000002275">
    <property type="component" value="Chromosome 2"/>
</dbReference>
<dbReference type="GO" id="GO:0008880">
    <property type="term" value="F:glucuronate isomerase activity"/>
    <property type="evidence" value="ECO:0007669"/>
    <property type="project" value="UniProtKB-UniRule"/>
</dbReference>
<dbReference type="GO" id="GO:0019698">
    <property type="term" value="P:D-galacturonate catabolic process"/>
    <property type="evidence" value="ECO:0007669"/>
    <property type="project" value="TreeGrafter"/>
</dbReference>
<dbReference type="GO" id="GO:0042840">
    <property type="term" value="P:D-glucuronate catabolic process"/>
    <property type="evidence" value="ECO:0007669"/>
    <property type="project" value="TreeGrafter"/>
</dbReference>
<dbReference type="Gene3D" id="3.20.20.140">
    <property type="entry name" value="Metal-dependent hydrolases"/>
    <property type="match status" value="1"/>
</dbReference>
<dbReference type="Gene3D" id="1.10.2020.10">
    <property type="entry name" value="uronate isomerase, domain 2, chain A"/>
    <property type="match status" value="1"/>
</dbReference>
<dbReference type="HAMAP" id="MF_00675">
    <property type="entry name" value="UxaC"/>
    <property type="match status" value="1"/>
</dbReference>
<dbReference type="InterPro" id="IPR032466">
    <property type="entry name" value="Metal_Hydrolase"/>
</dbReference>
<dbReference type="InterPro" id="IPR003766">
    <property type="entry name" value="Uronate_isomerase"/>
</dbReference>
<dbReference type="NCBIfam" id="NF002794">
    <property type="entry name" value="PRK02925.1"/>
    <property type="match status" value="1"/>
</dbReference>
<dbReference type="PANTHER" id="PTHR30068">
    <property type="entry name" value="URONATE ISOMERASE"/>
    <property type="match status" value="1"/>
</dbReference>
<dbReference type="PANTHER" id="PTHR30068:SF4">
    <property type="entry name" value="URONATE ISOMERASE"/>
    <property type="match status" value="1"/>
</dbReference>
<dbReference type="Pfam" id="PF02614">
    <property type="entry name" value="UxaC"/>
    <property type="match status" value="1"/>
</dbReference>
<dbReference type="SUPFAM" id="SSF51556">
    <property type="entry name" value="Metallo-dependent hydrolases"/>
    <property type="match status" value="1"/>
</dbReference>
<gene>
    <name evidence="1" type="primary">uxaC</name>
    <name type="ordered locus">VV2_1070</name>
</gene>
<feature type="chain" id="PRO_0000172792" description="Uronate isomerase">
    <location>
        <begin position="1"/>
        <end position="470"/>
    </location>
</feature>
<comment type="catalytic activity">
    <reaction evidence="1">
        <text>D-glucuronate = D-fructuronate</text>
        <dbReference type="Rhea" id="RHEA:13049"/>
        <dbReference type="ChEBI" id="CHEBI:58720"/>
        <dbReference type="ChEBI" id="CHEBI:59863"/>
        <dbReference type="EC" id="5.3.1.12"/>
    </reaction>
</comment>
<comment type="catalytic activity">
    <reaction evidence="1">
        <text>aldehydo-D-galacturonate = keto-D-tagaturonate</text>
        <dbReference type="Rhea" id="RHEA:27702"/>
        <dbReference type="ChEBI" id="CHEBI:12952"/>
        <dbReference type="ChEBI" id="CHEBI:17886"/>
        <dbReference type="EC" id="5.3.1.12"/>
    </reaction>
</comment>
<comment type="pathway">
    <text evidence="1">Carbohydrate metabolism; pentose and glucuronate interconversion.</text>
</comment>
<comment type="similarity">
    <text evidence="1">Belongs to the metallo-dependent hydrolases superfamily. Uronate isomerase family.</text>
</comment>